<proteinExistence type="evidence at protein level"/>
<reference key="1">
    <citation type="journal article" date="2003" name="Nature">
        <title>The DNA sequence and analysis of human chromosome 6.</title>
        <authorList>
            <person name="Mungall A.J."/>
            <person name="Palmer S.A."/>
            <person name="Sims S.K."/>
            <person name="Edwards C.A."/>
            <person name="Ashurst J.L."/>
            <person name="Wilming L."/>
            <person name="Jones M.C."/>
            <person name="Horton R."/>
            <person name="Hunt S.E."/>
            <person name="Scott C.E."/>
            <person name="Gilbert J.G.R."/>
            <person name="Clamp M.E."/>
            <person name="Bethel G."/>
            <person name="Milne S."/>
            <person name="Ainscough R."/>
            <person name="Almeida J.P."/>
            <person name="Ambrose K.D."/>
            <person name="Andrews T.D."/>
            <person name="Ashwell R.I.S."/>
            <person name="Babbage A.K."/>
            <person name="Bagguley C.L."/>
            <person name="Bailey J."/>
            <person name="Banerjee R."/>
            <person name="Barker D.J."/>
            <person name="Barlow K.F."/>
            <person name="Bates K."/>
            <person name="Beare D.M."/>
            <person name="Beasley H."/>
            <person name="Beasley O."/>
            <person name="Bird C.P."/>
            <person name="Blakey S.E."/>
            <person name="Bray-Allen S."/>
            <person name="Brook J."/>
            <person name="Brown A.J."/>
            <person name="Brown J.Y."/>
            <person name="Burford D.C."/>
            <person name="Burrill W."/>
            <person name="Burton J."/>
            <person name="Carder C."/>
            <person name="Carter N.P."/>
            <person name="Chapman J.C."/>
            <person name="Clark S.Y."/>
            <person name="Clark G."/>
            <person name="Clee C.M."/>
            <person name="Clegg S."/>
            <person name="Cobley V."/>
            <person name="Collier R.E."/>
            <person name="Collins J.E."/>
            <person name="Colman L.K."/>
            <person name="Corby N.R."/>
            <person name="Coville G.J."/>
            <person name="Culley K.M."/>
            <person name="Dhami P."/>
            <person name="Davies J."/>
            <person name="Dunn M."/>
            <person name="Earthrowl M.E."/>
            <person name="Ellington A.E."/>
            <person name="Evans K.A."/>
            <person name="Faulkner L."/>
            <person name="Francis M.D."/>
            <person name="Frankish A."/>
            <person name="Frankland J."/>
            <person name="French L."/>
            <person name="Garner P."/>
            <person name="Garnett J."/>
            <person name="Ghori M.J."/>
            <person name="Gilby L.M."/>
            <person name="Gillson C.J."/>
            <person name="Glithero R.J."/>
            <person name="Grafham D.V."/>
            <person name="Grant M."/>
            <person name="Gribble S."/>
            <person name="Griffiths C."/>
            <person name="Griffiths M.N.D."/>
            <person name="Hall R."/>
            <person name="Halls K.S."/>
            <person name="Hammond S."/>
            <person name="Harley J.L."/>
            <person name="Hart E.A."/>
            <person name="Heath P.D."/>
            <person name="Heathcott R."/>
            <person name="Holmes S.J."/>
            <person name="Howden P.J."/>
            <person name="Howe K.L."/>
            <person name="Howell G.R."/>
            <person name="Huckle E."/>
            <person name="Humphray S.J."/>
            <person name="Humphries M.D."/>
            <person name="Hunt A.R."/>
            <person name="Johnson C.M."/>
            <person name="Joy A.A."/>
            <person name="Kay M."/>
            <person name="Keenan S.J."/>
            <person name="Kimberley A.M."/>
            <person name="King A."/>
            <person name="Laird G.K."/>
            <person name="Langford C."/>
            <person name="Lawlor S."/>
            <person name="Leongamornlert D.A."/>
            <person name="Leversha M."/>
            <person name="Lloyd C.R."/>
            <person name="Lloyd D.M."/>
            <person name="Loveland J.E."/>
            <person name="Lovell J."/>
            <person name="Martin S."/>
            <person name="Mashreghi-Mohammadi M."/>
            <person name="Maslen G.L."/>
            <person name="Matthews L."/>
            <person name="McCann O.T."/>
            <person name="McLaren S.J."/>
            <person name="McLay K."/>
            <person name="McMurray A."/>
            <person name="Moore M.J.F."/>
            <person name="Mullikin J.C."/>
            <person name="Niblett D."/>
            <person name="Nickerson T."/>
            <person name="Novik K.L."/>
            <person name="Oliver K."/>
            <person name="Overton-Larty E.K."/>
            <person name="Parker A."/>
            <person name="Patel R."/>
            <person name="Pearce A.V."/>
            <person name="Peck A.I."/>
            <person name="Phillimore B.J.C.T."/>
            <person name="Phillips S."/>
            <person name="Plumb R.W."/>
            <person name="Porter K.M."/>
            <person name="Ramsey Y."/>
            <person name="Ranby S.A."/>
            <person name="Rice C.M."/>
            <person name="Ross M.T."/>
            <person name="Searle S.M."/>
            <person name="Sehra H.K."/>
            <person name="Sheridan E."/>
            <person name="Skuce C.D."/>
            <person name="Smith S."/>
            <person name="Smith M."/>
            <person name="Spraggon L."/>
            <person name="Squares S.L."/>
            <person name="Steward C.A."/>
            <person name="Sycamore N."/>
            <person name="Tamlyn-Hall G."/>
            <person name="Tester J."/>
            <person name="Theaker A.J."/>
            <person name="Thomas D.W."/>
            <person name="Thorpe A."/>
            <person name="Tracey A."/>
            <person name="Tromans A."/>
            <person name="Tubby B."/>
            <person name="Wall M."/>
            <person name="Wallis J.M."/>
            <person name="West A.P."/>
            <person name="White S.S."/>
            <person name="Whitehead S.L."/>
            <person name="Whittaker H."/>
            <person name="Wild A."/>
            <person name="Willey D.J."/>
            <person name="Wilmer T.E."/>
            <person name="Wood J.M."/>
            <person name="Wray P.W."/>
            <person name="Wyatt J.C."/>
            <person name="Young L."/>
            <person name="Younger R.M."/>
            <person name="Bentley D.R."/>
            <person name="Coulson A."/>
            <person name="Durbin R.M."/>
            <person name="Hubbard T."/>
            <person name="Sulston J.E."/>
            <person name="Dunham I."/>
            <person name="Rogers J."/>
            <person name="Beck S."/>
        </authorList>
    </citation>
    <scope>NUCLEOTIDE SEQUENCE [LARGE SCALE GENOMIC DNA]</scope>
</reference>
<reference key="2">
    <citation type="submission" date="2005-09" db="EMBL/GenBank/DDBJ databases">
        <authorList>
            <person name="Mural R.J."/>
            <person name="Istrail S."/>
            <person name="Sutton G.G."/>
            <person name="Florea L."/>
            <person name="Halpern A.L."/>
            <person name="Mobarry C.M."/>
            <person name="Lippert R."/>
            <person name="Walenz B."/>
            <person name="Shatkay H."/>
            <person name="Dew I."/>
            <person name="Miller J.R."/>
            <person name="Flanigan M.J."/>
            <person name="Edwards N.J."/>
            <person name="Bolanos R."/>
            <person name="Fasulo D."/>
            <person name="Halldorsson B.V."/>
            <person name="Hannenhalli S."/>
            <person name="Turner R."/>
            <person name="Yooseph S."/>
            <person name="Lu F."/>
            <person name="Nusskern D.R."/>
            <person name="Shue B.C."/>
            <person name="Zheng X.H."/>
            <person name="Zhong F."/>
            <person name="Delcher A.L."/>
            <person name="Huson D.H."/>
            <person name="Kravitz S.A."/>
            <person name="Mouchard L."/>
            <person name="Reinert K."/>
            <person name="Remington K.A."/>
            <person name="Clark A.G."/>
            <person name="Waterman M.S."/>
            <person name="Eichler E.E."/>
            <person name="Adams M.D."/>
            <person name="Hunkapiller M.W."/>
            <person name="Myers E.W."/>
            <person name="Venter J.C."/>
        </authorList>
    </citation>
    <scope>NUCLEOTIDE SEQUENCE [LARGE SCALE GENOMIC DNA]</scope>
</reference>
<reference key="3">
    <citation type="journal article" date="2004" name="Genome Res.">
        <title>The status, quality, and expansion of the NIH full-length cDNA project: the Mammalian Gene Collection (MGC).</title>
        <authorList>
            <consortium name="The MGC Project Team"/>
        </authorList>
    </citation>
    <scope>NUCLEOTIDE SEQUENCE [LARGE SCALE MRNA]</scope>
    <source>
        <tissue>Brain</tissue>
    </source>
</reference>
<dbReference type="EMBL" id="Z99289">
    <property type="status" value="NOT_ANNOTATED_CDS"/>
    <property type="molecule type" value="Genomic_DNA"/>
</dbReference>
<dbReference type="EMBL" id="CH471051">
    <property type="protein sequence ID" value="EAW48271.1"/>
    <property type="molecule type" value="Genomic_DNA"/>
</dbReference>
<dbReference type="EMBL" id="BC044912">
    <property type="protein sequence ID" value="AAH44912.1"/>
    <property type="molecule type" value="mRNA"/>
</dbReference>
<dbReference type="CCDS" id="CCDS34513.1"/>
<dbReference type="RefSeq" id="NP_001028736.1">
    <property type="nucleotide sequence ID" value="NM_001033564.3"/>
</dbReference>
<dbReference type="RefSeq" id="XP_016866663.1">
    <property type="nucleotide sequence ID" value="XM_017011174.3"/>
</dbReference>
<dbReference type="RefSeq" id="XP_016866664.1">
    <property type="nucleotide sequence ID" value="XM_017011175.3"/>
</dbReference>
<dbReference type="RefSeq" id="XP_054212161.1">
    <property type="nucleotide sequence ID" value="XM_054356186.1"/>
</dbReference>
<dbReference type="RefSeq" id="XP_054212162.1">
    <property type="nucleotide sequence ID" value="XM_054356187.1"/>
</dbReference>
<dbReference type="BioGRID" id="534803">
    <property type="interactions" value="2"/>
</dbReference>
<dbReference type="FunCoup" id="Q4G0N7">
    <property type="interactions" value="64"/>
</dbReference>
<dbReference type="IntAct" id="Q4G0N7">
    <property type="interactions" value="3"/>
</dbReference>
<dbReference type="STRING" id="9606.ENSP00000357645"/>
<dbReference type="iPTMnet" id="Q4G0N7"/>
<dbReference type="PhosphoSitePlus" id="Q4G0N7"/>
<dbReference type="BioMuta" id="FAM229B"/>
<dbReference type="MassIVE" id="Q4G0N7"/>
<dbReference type="PaxDb" id="9606-ENSP00000357645"/>
<dbReference type="PeptideAtlas" id="Q4G0N7"/>
<dbReference type="Pumba" id="Q4G0N7"/>
<dbReference type="Antibodypedia" id="50601">
    <property type="antibodies" value="33 antibodies from 5 providers"/>
</dbReference>
<dbReference type="DNASU" id="619208"/>
<dbReference type="Ensembl" id="ENST00000368656.7">
    <property type="protein sequence ID" value="ENSP00000357645.2"/>
    <property type="gene ID" value="ENSG00000203778.8"/>
</dbReference>
<dbReference type="Ensembl" id="ENST00000604268.1">
    <property type="protein sequence ID" value="ENSP00000474987.1"/>
    <property type="gene ID" value="ENSG00000203778.8"/>
</dbReference>
<dbReference type="GeneID" id="619208"/>
<dbReference type="KEGG" id="hsa:619208"/>
<dbReference type="MANE-Select" id="ENST00000368656.7">
    <property type="protein sequence ID" value="ENSP00000357645.2"/>
    <property type="RefSeq nucleotide sequence ID" value="NM_001033564.3"/>
    <property type="RefSeq protein sequence ID" value="NP_001028736.1"/>
</dbReference>
<dbReference type="UCSC" id="uc003pvs.4">
    <property type="organism name" value="human"/>
</dbReference>
<dbReference type="AGR" id="HGNC:33858"/>
<dbReference type="CTD" id="619208"/>
<dbReference type="GeneCards" id="FAM229B"/>
<dbReference type="HGNC" id="HGNC:33858">
    <property type="gene designation" value="FAM229B"/>
</dbReference>
<dbReference type="HPA" id="ENSG00000203778">
    <property type="expression patterns" value="Tissue enriched (testis)"/>
</dbReference>
<dbReference type="neXtProt" id="NX_Q4G0N7"/>
<dbReference type="OpenTargets" id="ENSG00000203778"/>
<dbReference type="PharmGKB" id="PA162380460"/>
<dbReference type="VEuPathDB" id="HostDB:ENSG00000203778"/>
<dbReference type="eggNOG" id="ENOG502TEG8">
    <property type="taxonomic scope" value="Eukaryota"/>
</dbReference>
<dbReference type="GeneTree" id="ENSGT00390000017996"/>
<dbReference type="HOGENOM" id="CLU_2589122_0_0_1"/>
<dbReference type="InParanoid" id="Q4G0N7"/>
<dbReference type="OMA" id="ACNGKET"/>
<dbReference type="OrthoDB" id="9818842at2759"/>
<dbReference type="PAN-GO" id="Q4G0N7">
    <property type="GO annotations" value="0 GO annotations based on evolutionary models"/>
</dbReference>
<dbReference type="PhylomeDB" id="Q4G0N7"/>
<dbReference type="TreeFam" id="TF339579"/>
<dbReference type="PathwayCommons" id="Q4G0N7"/>
<dbReference type="SignaLink" id="Q4G0N7"/>
<dbReference type="BioGRID-ORCS" id="619208">
    <property type="hits" value="18 hits in 1142 CRISPR screens"/>
</dbReference>
<dbReference type="ChiTaRS" id="FAM229B">
    <property type="organism name" value="human"/>
</dbReference>
<dbReference type="GenomeRNAi" id="619208"/>
<dbReference type="Pharos" id="Q4G0N7">
    <property type="development level" value="Tdark"/>
</dbReference>
<dbReference type="PRO" id="PR:Q4G0N7"/>
<dbReference type="Proteomes" id="UP000005640">
    <property type="component" value="Chromosome 6"/>
</dbReference>
<dbReference type="RNAct" id="Q4G0N7">
    <property type="molecule type" value="protein"/>
</dbReference>
<dbReference type="Bgee" id="ENSG00000203778">
    <property type="expression patterns" value="Expressed in left testis and 168 other cell types or tissues"/>
</dbReference>
<dbReference type="InterPro" id="IPR028025">
    <property type="entry name" value="FAM229"/>
</dbReference>
<dbReference type="PANTHER" id="PTHR35355">
    <property type="entry name" value="PROTEIN FAM229A"/>
    <property type="match status" value="1"/>
</dbReference>
<dbReference type="PANTHER" id="PTHR35355:SF2">
    <property type="entry name" value="PROTEIN FAM229B"/>
    <property type="match status" value="1"/>
</dbReference>
<dbReference type="Pfam" id="PF14982">
    <property type="entry name" value="UPF0731"/>
    <property type="match status" value="1"/>
</dbReference>
<comment type="interaction">
    <interactant intactId="EBI-18340430">
        <id>Q4G0N7</id>
    </interactant>
    <interactant intactId="EBI-6423734">
        <id>Q9BXA7</id>
        <label>TSSK1B</label>
    </interactant>
    <organismsDiffer>false</organismsDiffer>
    <experiments>4</experiments>
</comment>
<comment type="interaction">
    <interactant intactId="EBI-18340430">
        <id>Q4G0N7</id>
    </interactant>
    <interactant intactId="EBI-852089">
        <id>Q96PF2</id>
        <label>TSSK2</label>
    </interactant>
    <organismsDiffer>false</organismsDiffer>
    <experiments>3</experiments>
</comment>
<comment type="similarity">
    <text evidence="2">Belongs to the FAM229 family.</text>
</comment>
<gene>
    <name type="primary">FAM229B</name>
    <name type="synonym">C6orf225</name>
</gene>
<keyword id="KW-1267">Proteomics identification</keyword>
<keyword id="KW-1185">Reference proteome</keyword>
<feature type="chain" id="PRO_0000335816" description="Protein FAM229B">
    <location>
        <begin position="1"/>
        <end position="80"/>
    </location>
</feature>
<feature type="region of interest" description="Disordered" evidence="1">
    <location>
        <begin position="1"/>
        <end position="44"/>
    </location>
</feature>
<accession>Q4G0N7</accession>
<accession>B8ZZ33</accession>
<organism>
    <name type="scientific">Homo sapiens</name>
    <name type="common">Human</name>
    <dbReference type="NCBI Taxonomy" id="9606"/>
    <lineage>
        <taxon>Eukaryota</taxon>
        <taxon>Metazoa</taxon>
        <taxon>Chordata</taxon>
        <taxon>Craniata</taxon>
        <taxon>Vertebrata</taxon>
        <taxon>Euteleostomi</taxon>
        <taxon>Mammalia</taxon>
        <taxon>Eutheria</taxon>
        <taxon>Euarchontoglires</taxon>
        <taxon>Primates</taxon>
        <taxon>Haplorrhini</taxon>
        <taxon>Catarrhini</taxon>
        <taxon>Hominidae</taxon>
        <taxon>Homo</taxon>
    </lineage>
</organism>
<name>F229B_HUMAN</name>
<evidence type="ECO:0000256" key="1">
    <source>
        <dbReference type="SAM" id="MobiDB-lite"/>
    </source>
</evidence>
<evidence type="ECO:0000305" key="2"/>
<protein>
    <recommendedName>
        <fullName>Protein FAM229B</fullName>
    </recommendedName>
</protein>
<sequence>MPFQFGTQPRRFPVEGGDSSIELEPGLSSSAACNGKEMSPTRQLRRCPGSHCLTITDVPVTVYATTRKPPAQSSKEMHPK</sequence>